<dbReference type="EC" id="6.3.2.1" evidence="1"/>
<dbReference type="EC" id="2.7.4.25" evidence="1"/>
<dbReference type="EMBL" id="CP000111">
    <property type="protein sequence ID" value="ABB50743.1"/>
    <property type="molecule type" value="Genomic_DNA"/>
</dbReference>
<dbReference type="RefSeq" id="WP_011377224.1">
    <property type="nucleotide sequence ID" value="NC_007577.1"/>
</dbReference>
<dbReference type="SMR" id="Q318F2"/>
<dbReference type="STRING" id="74546.PMT9312_1682"/>
<dbReference type="KEGG" id="pmi:PMT9312_1682"/>
<dbReference type="eggNOG" id="COG0283">
    <property type="taxonomic scope" value="Bacteria"/>
</dbReference>
<dbReference type="eggNOG" id="COG0414">
    <property type="taxonomic scope" value="Bacteria"/>
</dbReference>
<dbReference type="HOGENOM" id="CLU_037427_0_0_3"/>
<dbReference type="OrthoDB" id="9773087at2"/>
<dbReference type="UniPathway" id="UPA00028">
    <property type="reaction ID" value="UER00005"/>
</dbReference>
<dbReference type="Proteomes" id="UP000002715">
    <property type="component" value="Chromosome"/>
</dbReference>
<dbReference type="GO" id="GO:0005829">
    <property type="term" value="C:cytosol"/>
    <property type="evidence" value="ECO:0007669"/>
    <property type="project" value="TreeGrafter"/>
</dbReference>
<dbReference type="GO" id="GO:0005524">
    <property type="term" value="F:ATP binding"/>
    <property type="evidence" value="ECO:0007669"/>
    <property type="project" value="UniProtKB-UniRule"/>
</dbReference>
<dbReference type="GO" id="GO:0036430">
    <property type="term" value="F:CMP kinase activity"/>
    <property type="evidence" value="ECO:0007669"/>
    <property type="project" value="RHEA"/>
</dbReference>
<dbReference type="GO" id="GO:0036431">
    <property type="term" value="F:dCMP kinase activity"/>
    <property type="evidence" value="ECO:0007669"/>
    <property type="project" value="RHEA"/>
</dbReference>
<dbReference type="GO" id="GO:0004592">
    <property type="term" value="F:pantoate-beta-alanine ligase activity"/>
    <property type="evidence" value="ECO:0007669"/>
    <property type="project" value="UniProtKB-UniRule"/>
</dbReference>
<dbReference type="GO" id="GO:0015949">
    <property type="term" value="P:nucleobase-containing small molecule interconversion"/>
    <property type="evidence" value="ECO:0007669"/>
    <property type="project" value="TreeGrafter"/>
</dbReference>
<dbReference type="GO" id="GO:0015940">
    <property type="term" value="P:pantothenate biosynthetic process"/>
    <property type="evidence" value="ECO:0007669"/>
    <property type="project" value="UniProtKB-UniRule"/>
</dbReference>
<dbReference type="GO" id="GO:0006220">
    <property type="term" value="P:pyrimidine nucleotide metabolic process"/>
    <property type="evidence" value="ECO:0007669"/>
    <property type="project" value="UniProtKB-UniRule"/>
</dbReference>
<dbReference type="CDD" id="cd02020">
    <property type="entry name" value="CMPK"/>
    <property type="match status" value="1"/>
</dbReference>
<dbReference type="CDD" id="cd00560">
    <property type="entry name" value="PanC"/>
    <property type="match status" value="1"/>
</dbReference>
<dbReference type="Gene3D" id="3.40.50.620">
    <property type="entry name" value="HUPs"/>
    <property type="match status" value="1"/>
</dbReference>
<dbReference type="Gene3D" id="3.40.50.300">
    <property type="entry name" value="P-loop containing nucleotide triphosphate hydrolases"/>
    <property type="match status" value="1"/>
</dbReference>
<dbReference type="Gene3D" id="3.30.1300.10">
    <property type="entry name" value="Pantoate-beta-alanine ligase, C-terminal domain"/>
    <property type="match status" value="1"/>
</dbReference>
<dbReference type="HAMAP" id="MF_00238">
    <property type="entry name" value="Cytidyl_kinase_type1"/>
    <property type="match status" value="1"/>
</dbReference>
<dbReference type="HAMAP" id="MF_00158">
    <property type="entry name" value="PanC"/>
    <property type="match status" value="1"/>
</dbReference>
<dbReference type="HAMAP" id="MF_01349">
    <property type="entry name" value="PanCY"/>
    <property type="match status" value="1"/>
</dbReference>
<dbReference type="InterPro" id="IPR003136">
    <property type="entry name" value="Cytidylate_kin"/>
</dbReference>
<dbReference type="InterPro" id="IPR011994">
    <property type="entry name" value="Cytidylate_kinase_dom"/>
</dbReference>
<dbReference type="InterPro" id="IPR027417">
    <property type="entry name" value="P-loop_NTPase"/>
</dbReference>
<dbReference type="InterPro" id="IPR003721">
    <property type="entry name" value="Pantoate_ligase"/>
</dbReference>
<dbReference type="InterPro" id="IPR024894">
    <property type="entry name" value="Pantoate_ligase/cytidylate_kin"/>
</dbReference>
<dbReference type="InterPro" id="IPR042176">
    <property type="entry name" value="Pantoate_ligase_C"/>
</dbReference>
<dbReference type="InterPro" id="IPR014729">
    <property type="entry name" value="Rossmann-like_a/b/a_fold"/>
</dbReference>
<dbReference type="NCBIfam" id="TIGR00017">
    <property type="entry name" value="cmk"/>
    <property type="match status" value="1"/>
</dbReference>
<dbReference type="NCBIfam" id="TIGR00018">
    <property type="entry name" value="panC"/>
    <property type="match status" value="1"/>
</dbReference>
<dbReference type="NCBIfam" id="NF010004">
    <property type="entry name" value="PRK13477.1"/>
    <property type="match status" value="1"/>
</dbReference>
<dbReference type="PANTHER" id="PTHR21299:SF2">
    <property type="entry name" value="CYTIDYLATE KINASE"/>
    <property type="match status" value="1"/>
</dbReference>
<dbReference type="PANTHER" id="PTHR21299">
    <property type="entry name" value="CYTIDYLATE KINASE/PANTOATE-BETA-ALANINE LIGASE"/>
    <property type="match status" value="1"/>
</dbReference>
<dbReference type="Pfam" id="PF02224">
    <property type="entry name" value="Cytidylate_kin"/>
    <property type="match status" value="1"/>
</dbReference>
<dbReference type="Pfam" id="PF02569">
    <property type="entry name" value="Pantoate_ligase"/>
    <property type="match status" value="1"/>
</dbReference>
<dbReference type="SUPFAM" id="SSF52374">
    <property type="entry name" value="Nucleotidylyl transferase"/>
    <property type="match status" value="1"/>
</dbReference>
<dbReference type="SUPFAM" id="SSF52540">
    <property type="entry name" value="P-loop containing nucleoside triphosphate hydrolases"/>
    <property type="match status" value="1"/>
</dbReference>
<feature type="chain" id="PRO_0000239789" description="Bifunctional pantoate ligase/cytidylate kinase">
    <location>
        <begin position="1"/>
        <end position="510"/>
    </location>
</feature>
<feature type="region of interest" description="Pantoate--beta-alanine ligase" evidence="1">
    <location>
        <begin position="1"/>
        <end position="276"/>
    </location>
</feature>
<feature type="region of interest" description="Cytidylate kinase" evidence="1">
    <location>
        <begin position="277"/>
        <end position="510"/>
    </location>
</feature>
<feature type="active site" description="Proton donor" evidence="1">
    <location>
        <position position="36"/>
    </location>
</feature>
<feature type="binding site" evidence="1">
    <location>
        <begin position="29"/>
        <end position="36"/>
    </location>
    <ligand>
        <name>ATP</name>
        <dbReference type="ChEBI" id="CHEBI:30616"/>
    </ligand>
</feature>
<feature type="binding site" evidence="1">
    <location>
        <position position="61"/>
    </location>
    <ligand>
        <name>(R)-pantoate</name>
        <dbReference type="ChEBI" id="CHEBI:15980"/>
    </ligand>
</feature>
<feature type="binding site" evidence="1">
    <location>
        <position position="61"/>
    </location>
    <ligand>
        <name>beta-alanine</name>
        <dbReference type="ChEBI" id="CHEBI:57966"/>
    </ligand>
</feature>
<feature type="binding site" evidence="1">
    <location>
        <begin position="150"/>
        <end position="153"/>
    </location>
    <ligand>
        <name>ATP</name>
        <dbReference type="ChEBI" id="CHEBI:30616"/>
    </ligand>
</feature>
<feature type="binding site" evidence="1">
    <location>
        <position position="156"/>
    </location>
    <ligand>
        <name>(R)-pantoate</name>
        <dbReference type="ChEBI" id="CHEBI:15980"/>
    </ligand>
</feature>
<feature type="binding site" evidence="1">
    <location>
        <begin position="187"/>
        <end position="190"/>
    </location>
    <ligand>
        <name>ATP</name>
        <dbReference type="ChEBI" id="CHEBI:30616"/>
    </ligand>
</feature>
<accession>Q318F2</accession>
<reference key="1">
    <citation type="journal article" date="2006" name="Science">
        <title>Genomic islands and the ecology and evolution of Prochlorococcus.</title>
        <authorList>
            <person name="Coleman M.L."/>
            <person name="Sullivan M.B."/>
            <person name="Martiny A.C."/>
            <person name="Steglich C."/>
            <person name="Barry K."/>
            <person name="Delong E.F."/>
            <person name="Chisholm S.W."/>
        </authorList>
    </citation>
    <scope>NUCLEOTIDE SEQUENCE [LARGE SCALE GENOMIC DNA]</scope>
    <source>
        <strain>MIT 9312</strain>
    </source>
</reference>
<gene>
    <name evidence="1" type="primary">panC/cmk</name>
    <name type="ordered locus">PMT9312_1682</name>
</gene>
<organism>
    <name type="scientific">Prochlorococcus marinus (strain MIT 9312)</name>
    <dbReference type="NCBI Taxonomy" id="74546"/>
    <lineage>
        <taxon>Bacteria</taxon>
        <taxon>Bacillati</taxon>
        <taxon>Cyanobacteriota</taxon>
        <taxon>Cyanophyceae</taxon>
        <taxon>Synechococcales</taxon>
        <taxon>Prochlorococcaceae</taxon>
        <taxon>Prochlorococcus</taxon>
    </lineage>
</organism>
<protein>
    <recommendedName>
        <fullName evidence="1">Bifunctional pantoate ligase/cytidylate kinase</fullName>
    </recommendedName>
    <domain>
        <recommendedName>
            <fullName evidence="1">Pantothenate synthetase</fullName>
            <shortName evidence="1">PS</shortName>
            <ecNumber evidence="1">6.3.2.1</ecNumber>
        </recommendedName>
        <alternativeName>
            <fullName evidence="1">Pantoate--beta-alanine ligase</fullName>
        </alternativeName>
        <alternativeName>
            <fullName evidence="1">Pantoate-activating enzyme</fullName>
        </alternativeName>
    </domain>
    <domain>
        <recommendedName>
            <fullName evidence="1">Cytidylate kinase</fullName>
            <shortName evidence="1">CK</shortName>
            <ecNumber evidence="1">2.7.4.25</ecNumber>
        </recommendedName>
        <alternativeName>
            <fullName evidence="1">Cytidine monophosphate kinase</fullName>
            <shortName evidence="1">CMP kinase</shortName>
        </alternativeName>
    </domain>
</protein>
<comment type="function">
    <text evidence="1">Catalyzes the condensation of pantoate with beta-alanine in an ATP-dependent reaction via a pantoyl-adenylate intermediate.</text>
</comment>
<comment type="function">
    <text evidence="1">Catalyzes the transfer of a phosphate group from ATP to either CMP or dCMP to form CDP or dCDP and ADP, respectively.</text>
</comment>
<comment type="catalytic activity">
    <reaction evidence="1">
        <text>(R)-pantoate + beta-alanine + ATP = (R)-pantothenate + AMP + diphosphate + H(+)</text>
        <dbReference type="Rhea" id="RHEA:10912"/>
        <dbReference type="ChEBI" id="CHEBI:15378"/>
        <dbReference type="ChEBI" id="CHEBI:15980"/>
        <dbReference type="ChEBI" id="CHEBI:29032"/>
        <dbReference type="ChEBI" id="CHEBI:30616"/>
        <dbReference type="ChEBI" id="CHEBI:33019"/>
        <dbReference type="ChEBI" id="CHEBI:57966"/>
        <dbReference type="ChEBI" id="CHEBI:456215"/>
        <dbReference type="EC" id="6.3.2.1"/>
    </reaction>
</comment>
<comment type="catalytic activity">
    <reaction evidence="1">
        <text>CMP + ATP = CDP + ADP</text>
        <dbReference type="Rhea" id="RHEA:11600"/>
        <dbReference type="ChEBI" id="CHEBI:30616"/>
        <dbReference type="ChEBI" id="CHEBI:58069"/>
        <dbReference type="ChEBI" id="CHEBI:60377"/>
        <dbReference type="ChEBI" id="CHEBI:456216"/>
        <dbReference type="EC" id="2.7.4.25"/>
    </reaction>
</comment>
<comment type="catalytic activity">
    <reaction evidence="1">
        <text>dCMP + ATP = dCDP + ADP</text>
        <dbReference type="Rhea" id="RHEA:25094"/>
        <dbReference type="ChEBI" id="CHEBI:30616"/>
        <dbReference type="ChEBI" id="CHEBI:57566"/>
        <dbReference type="ChEBI" id="CHEBI:58593"/>
        <dbReference type="ChEBI" id="CHEBI:456216"/>
        <dbReference type="EC" id="2.7.4.25"/>
    </reaction>
</comment>
<comment type="pathway">
    <text evidence="1">Cofactor biosynthesis; (R)-pantothenate biosynthesis; (R)-pantothenate from (R)-pantoate and beta-alanine: step 1/1.</text>
</comment>
<comment type="subcellular location">
    <subcellularLocation>
        <location evidence="1">Cytoplasm</location>
    </subcellularLocation>
</comment>
<comment type="similarity">
    <text evidence="1">In the N-terminal section; belongs to the pantothenate synthetase family.</text>
</comment>
<comment type="similarity">
    <text evidence="1">In the C-terminal section; belongs to the cytidylate kinase family. Type 1 subfamily.</text>
</comment>
<evidence type="ECO:0000255" key="1">
    <source>
        <dbReference type="HAMAP-Rule" id="MF_01349"/>
    </source>
</evidence>
<keyword id="KW-0067">ATP-binding</keyword>
<keyword id="KW-0963">Cytoplasm</keyword>
<keyword id="KW-0418">Kinase</keyword>
<keyword id="KW-0436">Ligase</keyword>
<keyword id="KW-0511">Multifunctional enzyme</keyword>
<keyword id="KW-0547">Nucleotide-binding</keyword>
<keyword id="KW-0566">Pantothenate biosynthesis</keyword>
<keyword id="KW-0808">Transferase</keyword>
<name>PANCY_PROM9</name>
<proteinExistence type="inferred from homology"/>
<sequence length="510" mass="58205">MKKVIIRKTEEIKNWRRNINSDINFIPTMGNLHNGHKTLISTAKNANSNVNLVSIFVNPLQFDNKSDLENYPKTIDNDIKISFENGADVIFIPSTEEIYPSDNKNITFLKAPLELSSSLCGLNRIGHFDGVCTVVYKLLNLIKPKNLYLGEKDWQQLLILKNLVLTKKLDVAIKSIPTQRDFDGIPLSSRNVHLSNNERKLIRFFSHELLVAKENFQQEKKINLKEIIQKLSAQKISIEYLEHLHPYTLQESKVEDNISILAGAIRCGETRLIDHVFLMKRSPIIAIDGPAGSGKSTVTQLIAKKLKLLYLDTGAMYRALSWLLIKENIDYKEEKKLQNILKDISIVFKSNTNSQQDVFINNYCVTEEIRSQEISSIVSKISSIKEVREFLVEEQRKIGESGGLVAEGRDIGTTVFPDAELKIFLTASIDERAKRRKSDKKSKDSQEIDLHKLKELIKKRDFEDSNREISPLIKANDAIEIITDGCSINEVVDKIIDLYNDKIPKETQIR</sequence>